<gene>
    <name evidence="1" type="primary">recR</name>
    <name type="ordered locus">Msil_0276</name>
</gene>
<dbReference type="EMBL" id="CP001280">
    <property type="protein sequence ID" value="ACK49255.1"/>
    <property type="molecule type" value="Genomic_DNA"/>
</dbReference>
<dbReference type="RefSeq" id="WP_012589325.1">
    <property type="nucleotide sequence ID" value="NC_011666.1"/>
</dbReference>
<dbReference type="SMR" id="B8EP17"/>
<dbReference type="STRING" id="395965.Msil_0276"/>
<dbReference type="KEGG" id="msl:Msil_0276"/>
<dbReference type="eggNOG" id="COG0353">
    <property type="taxonomic scope" value="Bacteria"/>
</dbReference>
<dbReference type="HOGENOM" id="CLU_060739_1_1_5"/>
<dbReference type="OrthoDB" id="9802672at2"/>
<dbReference type="Proteomes" id="UP000002257">
    <property type="component" value="Chromosome"/>
</dbReference>
<dbReference type="GO" id="GO:0003677">
    <property type="term" value="F:DNA binding"/>
    <property type="evidence" value="ECO:0007669"/>
    <property type="project" value="UniProtKB-UniRule"/>
</dbReference>
<dbReference type="GO" id="GO:0008270">
    <property type="term" value="F:zinc ion binding"/>
    <property type="evidence" value="ECO:0007669"/>
    <property type="project" value="UniProtKB-KW"/>
</dbReference>
<dbReference type="GO" id="GO:0006310">
    <property type="term" value="P:DNA recombination"/>
    <property type="evidence" value="ECO:0007669"/>
    <property type="project" value="UniProtKB-UniRule"/>
</dbReference>
<dbReference type="GO" id="GO:0006281">
    <property type="term" value="P:DNA repair"/>
    <property type="evidence" value="ECO:0007669"/>
    <property type="project" value="UniProtKB-UniRule"/>
</dbReference>
<dbReference type="CDD" id="cd01025">
    <property type="entry name" value="TOPRIM_recR"/>
    <property type="match status" value="1"/>
</dbReference>
<dbReference type="Gene3D" id="3.40.1360.10">
    <property type="match status" value="1"/>
</dbReference>
<dbReference type="Gene3D" id="6.10.250.240">
    <property type="match status" value="1"/>
</dbReference>
<dbReference type="Gene3D" id="1.10.8.420">
    <property type="entry name" value="RecR Domain 1"/>
    <property type="match status" value="1"/>
</dbReference>
<dbReference type="HAMAP" id="MF_00017">
    <property type="entry name" value="RecR"/>
    <property type="match status" value="1"/>
</dbReference>
<dbReference type="InterPro" id="IPR000093">
    <property type="entry name" value="DNA_Rcmb_RecR"/>
</dbReference>
<dbReference type="InterPro" id="IPR023627">
    <property type="entry name" value="Rcmb_RecR"/>
</dbReference>
<dbReference type="InterPro" id="IPR015967">
    <property type="entry name" value="Rcmb_RecR_Znf"/>
</dbReference>
<dbReference type="InterPro" id="IPR006171">
    <property type="entry name" value="TOPRIM_dom"/>
</dbReference>
<dbReference type="InterPro" id="IPR034137">
    <property type="entry name" value="TOPRIM_RecR"/>
</dbReference>
<dbReference type="NCBIfam" id="TIGR00615">
    <property type="entry name" value="recR"/>
    <property type="match status" value="1"/>
</dbReference>
<dbReference type="PANTHER" id="PTHR30446">
    <property type="entry name" value="RECOMBINATION PROTEIN RECR"/>
    <property type="match status" value="1"/>
</dbReference>
<dbReference type="PANTHER" id="PTHR30446:SF0">
    <property type="entry name" value="RECOMBINATION PROTEIN RECR"/>
    <property type="match status" value="1"/>
</dbReference>
<dbReference type="Pfam" id="PF21175">
    <property type="entry name" value="RecR_C"/>
    <property type="match status" value="1"/>
</dbReference>
<dbReference type="Pfam" id="PF21176">
    <property type="entry name" value="RecR_HhH"/>
    <property type="match status" value="1"/>
</dbReference>
<dbReference type="Pfam" id="PF13662">
    <property type="entry name" value="Toprim_4"/>
    <property type="match status" value="1"/>
</dbReference>
<dbReference type="SMART" id="SM00493">
    <property type="entry name" value="TOPRIM"/>
    <property type="match status" value="1"/>
</dbReference>
<dbReference type="SUPFAM" id="SSF111304">
    <property type="entry name" value="Recombination protein RecR"/>
    <property type="match status" value="1"/>
</dbReference>
<dbReference type="PROSITE" id="PS01300">
    <property type="entry name" value="RECR"/>
    <property type="match status" value="1"/>
</dbReference>
<dbReference type="PROSITE" id="PS50880">
    <property type="entry name" value="TOPRIM"/>
    <property type="match status" value="1"/>
</dbReference>
<protein>
    <recommendedName>
        <fullName evidence="1">Recombination protein RecR</fullName>
    </recommendedName>
</protein>
<feature type="chain" id="PRO_1000195400" description="Recombination protein RecR">
    <location>
        <begin position="1"/>
        <end position="201"/>
    </location>
</feature>
<feature type="domain" description="Toprim" evidence="1">
    <location>
        <begin position="83"/>
        <end position="178"/>
    </location>
</feature>
<feature type="zinc finger region" description="C4-type" evidence="1">
    <location>
        <begin position="60"/>
        <end position="75"/>
    </location>
</feature>
<name>RECR_METSB</name>
<comment type="function">
    <text evidence="1">May play a role in DNA repair. It seems to be involved in an RecBC-independent recombinational process of DNA repair. It may act with RecF and RecO.</text>
</comment>
<comment type="similarity">
    <text evidence="1">Belongs to the RecR family.</text>
</comment>
<reference key="1">
    <citation type="journal article" date="2010" name="J. Bacteriol.">
        <title>Complete genome sequence of the aerobic facultative methanotroph Methylocella silvestris BL2.</title>
        <authorList>
            <person name="Chen Y."/>
            <person name="Crombie A."/>
            <person name="Rahman M.T."/>
            <person name="Dedysh S.N."/>
            <person name="Liesack W."/>
            <person name="Stott M.B."/>
            <person name="Alam M."/>
            <person name="Theisen A.R."/>
            <person name="Murrell J.C."/>
            <person name="Dunfield P.F."/>
        </authorList>
    </citation>
    <scope>NUCLEOTIDE SEQUENCE [LARGE SCALE GENOMIC DNA]</scope>
    <source>
        <strain>DSM 15510 / CIP 108128 / LMG 27833 / NCIMB 13906 / BL2</strain>
    </source>
</reference>
<organism>
    <name type="scientific">Methylocella silvestris (strain DSM 15510 / CIP 108128 / LMG 27833 / NCIMB 13906 / BL2)</name>
    <dbReference type="NCBI Taxonomy" id="395965"/>
    <lineage>
        <taxon>Bacteria</taxon>
        <taxon>Pseudomonadati</taxon>
        <taxon>Pseudomonadota</taxon>
        <taxon>Alphaproteobacteria</taxon>
        <taxon>Hyphomicrobiales</taxon>
        <taxon>Beijerinckiaceae</taxon>
        <taxon>Methylocella</taxon>
    </lineage>
</organism>
<sequence length="201" mass="21530">MGDRICGPEIERLIQLLARLPGLGPRSARRAALHLIRKREELFGPLAEAMRVARDTIVSCSVCGNVDSCDPCTICRDERRDPSTLIVVETVGDLWALERSGAVKGRYHVLGGVLSPLDGVGPKDLNISSLIERVAAGGISEVVLAVNATVDGQTTAHYVTDLISHLNVRTTRLAHGVPVGGELDYLDEGTLAAALRARTDF</sequence>
<accession>B8EP17</accession>
<keyword id="KW-0227">DNA damage</keyword>
<keyword id="KW-0233">DNA recombination</keyword>
<keyword id="KW-0234">DNA repair</keyword>
<keyword id="KW-0479">Metal-binding</keyword>
<keyword id="KW-1185">Reference proteome</keyword>
<keyword id="KW-0862">Zinc</keyword>
<keyword id="KW-0863">Zinc-finger</keyword>
<proteinExistence type="inferred from homology"/>
<evidence type="ECO:0000255" key="1">
    <source>
        <dbReference type="HAMAP-Rule" id="MF_00017"/>
    </source>
</evidence>